<comment type="subcellular location">
    <subcellularLocation>
        <location>Mitochondrion</location>
    </subcellularLocation>
</comment>
<comment type="similarity">
    <text evidence="1">Belongs to the universal ribosomal protein uL6 family.</text>
</comment>
<protein>
    <recommendedName>
        <fullName evidence="1">Large ribosomal subunit protein uL6m</fullName>
    </recommendedName>
    <alternativeName>
        <fullName>60S ribosomal protein L6, mitochondrial</fullName>
    </alternativeName>
</protein>
<organism>
    <name type="scientific">Prototheca wickerhamii</name>
    <dbReference type="NCBI Taxonomy" id="3111"/>
    <lineage>
        <taxon>Eukaryota</taxon>
        <taxon>Viridiplantae</taxon>
        <taxon>Chlorophyta</taxon>
        <taxon>core chlorophytes</taxon>
        <taxon>Trebouxiophyceae</taxon>
        <taxon>Chlorellales</taxon>
        <taxon>Chlorellaceae</taxon>
        <taxon>Prototheca</taxon>
    </lineage>
</organism>
<gene>
    <name type="primary">RPL6</name>
</gene>
<geneLocation type="mitochondrion"/>
<accession>P46748</accession>
<dbReference type="EMBL" id="U02970">
    <property type="protein sequence ID" value="AAD12647.1"/>
    <property type="molecule type" value="Genomic_DNA"/>
</dbReference>
<dbReference type="PIR" id="T11928">
    <property type="entry name" value="T11928"/>
</dbReference>
<dbReference type="RefSeq" id="NP_042259.1">
    <property type="nucleotide sequence ID" value="NC_001613.1"/>
</dbReference>
<dbReference type="SMR" id="P46748"/>
<dbReference type="GeneID" id="802142"/>
<dbReference type="GO" id="GO:0005739">
    <property type="term" value="C:mitochondrion"/>
    <property type="evidence" value="ECO:0007669"/>
    <property type="project" value="UniProtKB-SubCell"/>
</dbReference>
<dbReference type="GO" id="GO:1990904">
    <property type="term" value="C:ribonucleoprotein complex"/>
    <property type="evidence" value="ECO:0007669"/>
    <property type="project" value="UniProtKB-KW"/>
</dbReference>
<dbReference type="GO" id="GO:0005840">
    <property type="term" value="C:ribosome"/>
    <property type="evidence" value="ECO:0007669"/>
    <property type="project" value="UniProtKB-KW"/>
</dbReference>
<dbReference type="GO" id="GO:0019843">
    <property type="term" value="F:rRNA binding"/>
    <property type="evidence" value="ECO:0007669"/>
    <property type="project" value="InterPro"/>
</dbReference>
<dbReference type="GO" id="GO:0003735">
    <property type="term" value="F:structural constituent of ribosome"/>
    <property type="evidence" value="ECO:0007669"/>
    <property type="project" value="InterPro"/>
</dbReference>
<dbReference type="GO" id="GO:0002181">
    <property type="term" value="P:cytoplasmic translation"/>
    <property type="evidence" value="ECO:0007669"/>
    <property type="project" value="TreeGrafter"/>
</dbReference>
<dbReference type="Gene3D" id="3.90.930.12">
    <property type="entry name" value="Ribosomal protein L6, alpha-beta domain"/>
    <property type="match status" value="1"/>
</dbReference>
<dbReference type="InterPro" id="IPR000702">
    <property type="entry name" value="Ribosomal_uL6-like"/>
</dbReference>
<dbReference type="InterPro" id="IPR036789">
    <property type="entry name" value="Ribosomal_uL6-like_a/b-dom_sf"/>
</dbReference>
<dbReference type="InterPro" id="IPR020040">
    <property type="entry name" value="Ribosomal_uL6_a/b-dom"/>
</dbReference>
<dbReference type="InterPro" id="IPR019906">
    <property type="entry name" value="Ribosomal_uL6_bac-type"/>
</dbReference>
<dbReference type="InterPro" id="IPR002358">
    <property type="entry name" value="Ribosomal_uL6_CS"/>
</dbReference>
<dbReference type="PANTHER" id="PTHR11655">
    <property type="entry name" value="60S/50S RIBOSOMAL PROTEIN L6/L9"/>
    <property type="match status" value="1"/>
</dbReference>
<dbReference type="PANTHER" id="PTHR11655:SF14">
    <property type="entry name" value="LARGE RIBOSOMAL SUBUNIT PROTEIN UL6M"/>
    <property type="match status" value="1"/>
</dbReference>
<dbReference type="Pfam" id="PF00347">
    <property type="entry name" value="Ribosomal_L6"/>
    <property type="match status" value="1"/>
</dbReference>
<dbReference type="PIRSF" id="PIRSF002162">
    <property type="entry name" value="Ribosomal_L6"/>
    <property type="match status" value="1"/>
</dbReference>
<dbReference type="PRINTS" id="PR00059">
    <property type="entry name" value="RIBOSOMALL6"/>
</dbReference>
<dbReference type="SUPFAM" id="SSF56053">
    <property type="entry name" value="Ribosomal protein L6"/>
    <property type="match status" value="1"/>
</dbReference>
<dbReference type="PROSITE" id="PS00525">
    <property type="entry name" value="RIBOSOMAL_L6_1"/>
    <property type="match status" value="1"/>
</dbReference>
<keyword id="KW-0496">Mitochondrion</keyword>
<keyword id="KW-0687">Ribonucleoprotein</keyword>
<keyword id="KW-0689">Ribosomal protein</keyword>
<feature type="chain" id="PRO_0000131093" description="Large ribosomal subunit protein uL6m">
    <location>
        <begin position="1"/>
        <end position="194"/>
    </location>
</feature>
<name>RM06_PROWI</name>
<proteinExistence type="inferred from homology"/>
<reference key="1">
    <citation type="journal article" date="1994" name="J. Mol. Biol.">
        <title>Complete sequence of the mitochondrial DNA of the chlorophyte alga Prototheca wickerhamii. Gene content and genome organization.</title>
        <authorList>
            <person name="Wolff G."/>
            <person name="Plante I."/>
            <person name="Lang B.F."/>
            <person name="Kueck U."/>
            <person name="Burger G."/>
        </authorList>
    </citation>
    <scope>NUCLEOTIDE SEQUENCE [GENOMIC DNA]</scope>
    <source>
        <strain>263-11</strain>
    </source>
</reference>
<sequence length="194" mass="21769">MKTLSILDTIIKIPEKIEIHPTTTEYIYTITGPLGSSSINLKKLDKNGIACINFDIQNKQVLIRSLYPKYNGLYKKLIENKFLGVSRGFCVYLEIVGVGYRAALLSSSLQNSTKDTNDTIVLKLGHSHDIHYKVPNGVRVFLQSPSEICIFGVDLNQVTQVAHSIRNTRPPSVYKGKGIRYTNEKIVTKTGKRK</sequence>
<evidence type="ECO:0000305" key="1"/>